<protein>
    <recommendedName>
        <fullName evidence="1">Serine hydroxymethyltransferase</fullName>
        <shortName evidence="1">SHMT</shortName>
        <shortName evidence="1">Serine methylase</shortName>
        <ecNumber evidence="1">2.1.2.1</ecNumber>
    </recommendedName>
</protein>
<evidence type="ECO:0000255" key="1">
    <source>
        <dbReference type="HAMAP-Rule" id="MF_00051"/>
    </source>
</evidence>
<comment type="function">
    <text evidence="1">Catalyzes the reversible interconversion of serine and glycine with tetrahydrofolate (THF) serving as the one-carbon carrier. This reaction serves as the major source of one-carbon groups required for the biosynthesis of purines, thymidylate, methionine, and other important biomolecules. Also exhibits THF-independent aldolase activity toward beta-hydroxyamino acids, producing glycine and aldehydes, via a retro-aldol mechanism.</text>
</comment>
<comment type="catalytic activity">
    <reaction evidence="1">
        <text>(6R)-5,10-methylene-5,6,7,8-tetrahydrofolate + glycine + H2O = (6S)-5,6,7,8-tetrahydrofolate + L-serine</text>
        <dbReference type="Rhea" id="RHEA:15481"/>
        <dbReference type="ChEBI" id="CHEBI:15377"/>
        <dbReference type="ChEBI" id="CHEBI:15636"/>
        <dbReference type="ChEBI" id="CHEBI:33384"/>
        <dbReference type="ChEBI" id="CHEBI:57305"/>
        <dbReference type="ChEBI" id="CHEBI:57453"/>
        <dbReference type="EC" id="2.1.2.1"/>
    </reaction>
</comment>
<comment type="cofactor">
    <cofactor evidence="1">
        <name>pyridoxal 5'-phosphate</name>
        <dbReference type="ChEBI" id="CHEBI:597326"/>
    </cofactor>
</comment>
<comment type="pathway">
    <text evidence="1">One-carbon metabolism; tetrahydrofolate interconversion.</text>
</comment>
<comment type="pathway">
    <text evidence="1">Amino-acid biosynthesis; glycine biosynthesis; glycine from L-serine: step 1/1.</text>
</comment>
<comment type="subunit">
    <text evidence="1">Homodimer.</text>
</comment>
<comment type="subcellular location">
    <subcellularLocation>
        <location evidence="1">Cytoplasm</location>
    </subcellularLocation>
</comment>
<comment type="similarity">
    <text evidence="1">Belongs to the SHMT family.</text>
</comment>
<feature type="chain" id="PRO_1000116826" description="Serine hydroxymethyltransferase">
    <location>
        <begin position="1"/>
        <end position="412"/>
    </location>
</feature>
<feature type="binding site" evidence="1">
    <location>
        <position position="117"/>
    </location>
    <ligand>
        <name>(6S)-5,6,7,8-tetrahydrofolate</name>
        <dbReference type="ChEBI" id="CHEBI:57453"/>
    </ligand>
</feature>
<feature type="binding site" evidence="1">
    <location>
        <begin position="121"/>
        <end position="123"/>
    </location>
    <ligand>
        <name>(6S)-5,6,7,8-tetrahydrofolate</name>
        <dbReference type="ChEBI" id="CHEBI:57453"/>
    </ligand>
</feature>
<feature type="binding site" evidence="1">
    <location>
        <begin position="349"/>
        <end position="351"/>
    </location>
    <ligand>
        <name>(6S)-5,6,7,8-tetrahydrofolate</name>
        <dbReference type="ChEBI" id="CHEBI:57453"/>
    </ligand>
</feature>
<feature type="site" description="Plays an important role in substrate specificity" evidence="1">
    <location>
        <position position="225"/>
    </location>
</feature>
<feature type="modified residue" description="N6-(pyridoxal phosphate)lysine" evidence="1">
    <location>
        <position position="226"/>
    </location>
</feature>
<name>GLYA_NITV9</name>
<keyword id="KW-0028">Amino-acid biosynthesis</keyword>
<keyword id="KW-0963">Cytoplasm</keyword>
<keyword id="KW-0554">One-carbon metabolism</keyword>
<keyword id="KW-0663">Pyridoxal phosphate</keyword>
<keyword id="KW-0808">Transferase</keyword>
<gene>
    <name evidence="1" type="primary">glyA</name>
    <name type="ordered locus">DvMF_3097</name>
</gene>
<reference key="1">
    <citation type="submission" date="2008-10" db="EMBL/GenBank/DDBJ databases">
        <title>Complete sequence of Desulfovibrio vulgaris str. 'Miyazaki F'.</title>
        <authorList>
            <person name="Lucas S."/>
            <person name="Copeland A."/>
            <person name="Lapidus A."/>
            <person name="Glavina del Rio T."/>
            <person name="Dalin E."/>
            <person name="Tice H."/>
            <person name="Bruce D."/>
            <person name="Goodwin L."/>
            <person name="Pitluck S."/>
            <person name="Sims D."/>
            <person name="Brettin T."/>
            <person name="Detter J.C."/>
            <person name="Han C."/>
            <person name="Larimer F."/>
            <person name="Land M."/>
            <person name="Hauser L."/>
            <person name="Kyrpides N."/>
            <person name="Mikhailova N."/>
            <person name="Hazen T.C."/>
            <person name="Richardson P."/>
        </authorList>
    </citation>
    <scope>NUCLEOTIDE SEQUENCE [LARGE SCALE GENOMIC DNA]</scope>
    <source>
        <strain>DSM 19637 / Miyazaki F</strain>
    </source>
</reference>
<dbReference type="EC" id="2.1.2.1" evidence="1"/>
<dbReference type="EMBL" id="CP001197">
    <property type="protein sequence ID" value="ACL10034.1"/>
    <property type="molecule type" value="Genomic_DNA"/>
</dbReference>
<dbReference type="SMR" id="B8DJF7"/>
<dbReference type="STRING" id="883.DvMF_3097"/>
<dbReference type="KEGG" id="dvm:DvMF_3097"/>
<dbReference type="eggNOG" id="COG0112">
    <property type="taxonomic scope" value="Bacteria"/>
</dbReference>
<dbReference type="HOGENOM" id="CLU_022477_2_1_7"/>
<dbReference type="OrthoDB" id="9803846at2"/>
<dbReference type="UniPathway" id="UPA00193"/>
<dbReference type="UniPathway" id="UPA00288">
    <property type="reaction ID" value="UER01023"/>
</dbReference>
<dbReference type="GO" id="GO:0005829">
    <property type="term" value="C:cytosol"/>
    <property type="evidence" value="ECO:0007669"/>
    <property type="project" value="TreeGrafter"/>
</dbReference>
<dbReference type="GO" id="GO:0004372">
    <property type="term" value="F:glycine hydroxymethyltransferase activity"/>
    <property type="evidence" value="ECO:0007669"/>
    <property type="project" value="UniProtKB-UniRule"/>
</dbReference>
<dbReference type="GO" id="GO:0030170">
    <property type="term" value="F:pyridoxal phosphate binding"/>
    <property type="evidence" value="ECO:0007669"/>
    <property type="project" value="UniProtKB-UniRule"/>
</dbReference>
<dbReference type="GO" id="GO:0019264">
    <property type="term" value="P:glycine biosynthetic process from serine"/>
    <property type="evidence" value="ECO:0007669"/>
    <property type="project" value="UniProtKB-UniRule"/>
</dbReference>
<dbReference type="GO" id="GO:0035999">
    <property type="term" value="P:tetrahydrofolate interconversion"/>
    <property type="evidence" value="ECO:0007669"/>
    <property type="project" value="UniProtKB-UniRule"/>
</dbReference>
<dbReference type="CDD" id="cd00378">
    <property type="entry name" value="SHMT"/>
    <property type="match status" value="1"/>
</dbReference>
<dbReference type="FunFam" id="3.40.640.10:FF:000001">
    <property type="entry name" value="Serine hydroxymethyltransferase"/>
    <property type="match status" value="1"/>
</dbReference>
<dbReference type="FunFam" id="3.90.1150.10:FF:000003">
    <property type="entry name" value="Serine hydroxymethyltransferase"/>
    <property type="match status" value="1"/>
</dbReference>
<dbReference type="Gene3D" id="3.90.1150.10">
    <property type="entry name" value="Aspartate Aminotransferase, domain 1"/>
    <property type="match status" value="1"/>
</dbReference>
<dbReference type="Gene3D" id="3.40.640.10">
    <property type="entry name" value="Type I PLP-dependent aspartate aminotransferase-like (Major domain)"/>
    <property type="match status" value="1"/>
</dbReference>
<dbReference type="HAMAP" id="MF_00051">
    <property type="entry name" value="SHMT"/>
    <property type="match status" value="1"/>
</dbReference>
<dbReference type="InterPro" id="IPR015424">
    <property type="entry name" value="PyrdxlP-dep_Trfase"/>
</dbReference>
<dbReference type="InterPro" id="IPR015421">
    <property type="entry name" value="PyrdxlP-dep_Trfase_major"/>
</dbReference>
<dbReference type="InterPro" id="IPR015422">
    <property type="entry name" value="PyrdxlP-dep_Trfase_small"/>
</dbReference>
<dbReference type="InterPro" id="IPR001085">
    <property type="entry name" value="Ser_HO-MeTrfase"/>
</dbReference>
<dbReference type="InterPro" id="IPR049943">
    <property type="entry name" value="Ser_HO-MeTrfase-like"/>
</dbReference>
<dbReference type="InterPro" id="IPR019798">
    <property type="entry name" value="Ser_HO-MeTrfase_PLP_BS"/>
</dbReference>
<dbReference type="InterPro" id="IPR039429">
    <property type="entry name" value="SHMT-like_dom"/>
</dbReference>
<dbReference type="NCBIfam" id="NF000586">
    <property type="entry name" value="PRK00011.1"/>
    <property type="match status" value="1"/>
</dbReference>
<dbReference type="PANTHER" id="PTHR11680">
    <property type="entry name" value="SERINE HYDROXYMETHYLTRANSFERASE"/>
    <property type="match status" value="1"/>
</dbReference>
<dbReference type="PANTHER" id="PTHR11680:SF50">
    <property type="entry name" value="SERINE HYDROXYMETHYLTRANSFERASE"/>
    <property type="match status" value="1"/>
</dbReference>
<dbReference type="Pfam" id="PF00464">
    <property type="entry name" value="SHMT"/>
    <property type="match status" value="1"/>
</dbReference>
<dbReference type="PIRSF" id="PIRSF000412">
    <property type="entry name" value="SHMT"/>
    <property type="match status" value="1"/>
</dbReference>
<dbReference type="SUPFAM" id="SSF53383">
    <property type="entry name" value="PLP-dependent transferases"/>
    <property type="match status" value="1"/>
</dbReference>
<dbReference type="PROSITE" id="PS00096">
    <property type="entry name" value="SHMT"/>
    <property type="match status" value="1"/>
</dbReference>
<proteinExistence type="inferred from homology"/>
<accession>B8DJF7</accession>
<sequence>MDELLIQDPEVGRAVTLEIERQTGKLELIASENFVSAAVRQAQGSVLTHKYAEGYPGKRYYGGCEFVDIAENLAIDRAKAIFGCGYANVQPHSGSQANMGVYFACLKPGDTILGMNLSHGGHLTHGSPVNFSGRLYNVVFYGVKKETGYIDYDEVAALAREHKPTLIVAGASAYPRTIDFARFRAIADEVGAKLMVDMAHIAGLVATGLHPTPIGQAHFTTTTTHKTLRGPRGGMILSDEDNAKTLNSQIFPGIQGGPLMHVIAAKAVAFGEALRPTFVDYQQQVVKNAARLAGCLTAAGYDLVSGGTDNHLMLMDLTAKDITGKDAEHALDKAGMTANKNTVPFETRSPFVTSGVRLGTPALTTRGMKEAEMEKVAAWIVDALANVNNETRLAAISREVEVFARQFPLFAW</sequence>
<organism>
    <name type="scientific">Nitratidesulfovibrio vulgaris (strain DSM 19637 / Miyazaki F)</name>
    <name type="common">Desulfovibrio vulgaris</name>
    <dbReference type="NCBI Taxonomy" id="883"/>
    <lineage>
        <taxon>Bacteria</taxon>
        <taxon>Pseudomonadati</taxon>
        <taxon>Thermodesulfobacteriota</taxon>
        <taxon>Desulfovibrionia</taxon>
        <taxon>Desulfovibrionales</taxon>
        <taxon>Desulfovibrionaceae</taxon>
        <taxon>Nitratidesulfovibrio</taxon>
    </lineage>
</organism>